<evidence type="ECO:0000255" key="1"/>
<evidence type="ECO:0000269" key="2">
    <source>
    </source>
</evidence>
<evidence type="ECO:0000269" key="3">
    <source>
    </source>
</evidence>
<evidence type="ECO:0000303" key="4">
    <source>
    </source>
</evidence>
<evidence type="ECO:0000303" key="5">
    <source>
    </source>
</evidence>
<evidence type="ECO:0000305" key="6"/>
<evidence type="ECO:0000312" key="7">
    <source>
        <dbReference type="EMBL" id="PHT92521.1"/>
    </source>
</evidence>
<feature type="transit peptide" description="Chloroplast" evidence="1">
    <location>
        <begin position="1"/>
        <end position="50"/>
    </location>
</feature>
<feature type="chain" id="PRO_0000445975" description="Protein STAY-GREEN homolog, chloroplastic">
    <location>
        <begin position="51"/>
        <end position="266"/>
    </location>
</feature>
<feature type="mutagenesis site" description="In cl; stay-green leaf phenotype during leaf senescence, and brown color of ripe fruits." evidence="2 3">
    <original>W</original>
    <variation>R</variation>
    <location>
        <position position="114"/>
    </location>
</feature>
<feature type="sequence conflict" description="In Ref. 1; ACB56586, 2; ABX82698 and 3; CAN88917." ref="1 2 3">
    <original>I</original>
    <variation>N</variation>
    <location>
        <position position="225"/>
    </location>
</feature>
<gene>
    <name evidence="5" type="primary">SGR</name>
    <name evidence="4" type="synonym">CL</name>
    <name evidence="7" type="ORF">T459_00403</name>
</gene>
<dbReference type="EMBL" id="EU414631">
    <property type="protein sequence ID" value="ACB56586.1"/>
    <property type="molecule type" value="mRNA"/>
</dbReference>
<dbReference type="EMBL" id="EU196733">
    <property type="protein sequence ID" value="ABX82698.1"/>
    <property type="molecule type" value="mRNA"/>
</dbReference>
<dbReference type="EMBL" id="AM746208">
    <property type="protein sequence ID" value="CAN88917.2"/>
    <property type="molecule type" value="mRNA"/>
</dbReference>
<dbReference type="EMBL" id="AYRZ02000001">
    <property type="protein sequence ID" value="PHT92521.1"/>
    <property type="molecule type" value="Genomic_DNA"/>
</dbReference>
<dbReference type="RefSeq" id="NP_001311847.1">
    <property type="nucleotide sequence ID" value="NM_001324918.1"/>
</dbReference>
<dbReference type="SMR" id="A9YF60"/>
<dbReference type="STRING" id="4072.A9YF60"/>
<dbReference type="EnsemblPlants" id="PHT92521">
    <property type="protein sequence ID" value="PHT92521"/>
    <property type="gene ID" value="T459_00403"/>
</dbReference>
<dbReference type="GeneID" id="107866321"/>
<dbReference type="Gramene" id="PHT92521">
    <property type="protein sequence ID" value="PHT92521"/>
    <property type="gene ID" value="T459_00403"/>
</dbReference>
<dbReference type="KEGG" id="cann:107866321"/>
<dbReference type="OMA" id="KDKMSLH"/>
<dbReference type="OrthoDB" id="2012322at2759"/>
<dbReference type="Proteomes" id="UP000222542">
    <property type="component" value="Chromosome 1"/>
</dbReference>
<dbReference type="GO" id="GO:0009507">
    <property type="term" value="C:chloroplast"/>
    <property type="evidence" value="ECO:0007669"/>
    <property type="project" value="UniProtKB-SubCell"/>
</dbReference>
<dbReference type="GO" id="GO:0015996">
    <property type="term" value="P:chlorophyll catabolic process"/>
    <property type="evidence" value="ECO:0000315"/>
    <property type="project" value="UniProtKB"/>
</dbReference>
<dbReference type="InterPro" id="IPR024438">
    <property type="entry name" value="Staygreen"/>
</dbReference>
<dbReference type="PANTHER" id="PTHR31750:SF4">
    <property type="entry name" value="LP06106P"/>
    <property type="match status" value="1"/>
</dbReference>
<dbReference type="PANTHER" id="PTHR31750">
    <property type="entry name" value="PROTEIN STAY-GREEN 1, CHLOROPLASTIC-RELATED"/>
    <property type="match status" value="1"/>
</dbReference>
<dbReference type="Pfam" id="PF12638">
    <property type="entry name" value="Staygreen"/>
    <property type="match status" value="1"/>
</dbReference>
<organism>
    <name type="scientific">Capsicum annuum</name>
    <name type="common">Capsicum pepper</name>
    <dbReference type="NCBI Taxonomy" id="4072"/>
    <lineage>
        <taxon>Eukaryota</taxon>
        <taxon>Viridiplantae</taxon>
        <taxon>Streptophyta</taxon>
        <taxon>Embryophyta</taxon>
        <taxon>Tracheophyta</taxon>
        <taxon>Spermatophyta</taxon>
        <taxon>Magnoliopsida</taxon>
        <taxon>eudicotyledons</taxon>
        <taxon>Gunneridae</taxon>
        <taxon>Pentapetalae</taxon>
        <taxon>asterids</taxon>
        <taxon>lamiids</taxon>
        <taxon>Solanales</taxon>
        <taxon>Solanaceae</taxon>
        <taxon>Solanoideae</taxon>
        <taxon>Capsiceae</taxon>
        <taxon>Capsicum</taxon>
    </lineage>
</organism>
<name>SGR_CAPAN</name>
<accession>A9YF60</accession>
<accession>A0A2G3AE59</accession>
<proteinExistence type="evidence at protein level"/>
<protein>
    <recommendedName>
        <fullName evidence="6">Protein STAY-GREEN homolog, chloroplastic</fullName>
        <shortName evidence="5">CaSGR</shortName>
    </recommendedName>
    <alternativeName>
        <fullName evidence="4">Protein CHLOROPHYLL RETAINER</fullName>
    </alternativeName>
</protein>
<comment type="function">
    <text evidence="2 3">Required to trigger chlorophyll degradation during leaf senescence and fruit ripening.</text>
</comment>
<comment type="subcellular location">
    <subcellularLocation>
        <location evidence="1">Plastid</location>
        <location evidence="1">Chloroplast</location>
    </subcellularLocation>
</comment>
<comment type="developmental stage">
    <text evidence="2 3">Expressed during fruit ripening, but not during fruit development (PubMed:18359841, PubMed:18427769). Expressed during leaf senescence, but not during leaf development (PubMed:18427769).</text>
</comment>
<comment type="similarity">
    <text evidence="6">Belongs to the staygreen family.</text>
</comment>
<reference key="1">
    <citation type="journal article" date="2008" name="Plant Physiol.">
        <title>Amino acid substitutions in homologs of the STAY-GREEN protein are responsible for the green-flesh and chlorophyll retainer mutations of tomato and pepper.</title>
        <authorList>
            <person name="Barry C.S."/>
            <person name="Mc Quinn R.P."/>
            <person name="Chung M.Y."/>
            <person name="Besuden A."/>
            <person name="Giovannoni J.J."/>
        </authorList>
    </citation>
    <scope>NUCLEOTIDE SEQUENCE [MRNA]</scope>
    <scope>FUNCTION</scope>
    <scope>DEVELOPMENTAL STAGE</scope>
    <scope>MUTAGENESIS OF TRP-114</scope>
    <source>
        <strain>cv. Ancho</strain>
    </source>
</reference>
<reference key="2">
    <citation type="journal article" date="2008" name="Theor. Appl. Genet.">
        <title>Chlorophyll breakdown during pepper fruit ripening in the chlorophyll retainer mutation is impaired at the homolog of the senescence-inducible stay-green gene.</title>
        <authorList>
            <person name="Borovsky Y."/>
            <person name="Paran I."/>
        </authorList>
    </citation>
    <scope>NUCLEOTIDE SEQUENCE [MRNA]</scope>
    <scope>FUNCTION</scope>
    <scope>DEVELOPMENTAL STAGE</scope>
    <scope>MUTAGENESIS OF TRP-114</scope>
    <source>
        <strain>cv. Maor</strain>
    </source>
</reference>
<reference key="3">
    <citation type="submission" date="2007-06" db="EMBL/GenBank/DDBJ databases">
        <title>Capsicum annuum partial mRNA for the chlorophyll retainer (stay green).</title>
        <authorList>
            <person name="Bouvier F."/>
            <person name="Mialoundama Samba A."/>
            <person name="Camara B."/>
        </authorList>
    </citation>
    <scope>NUCLEOTIDE SEQUENCE [MRNA]</scope>
    <source>
        <strain>cv. Yolo Wonder</strain>
    </source>
</reference>
<reference key="4">
    <citation type="journal article" date="2017" name="Genome Biol.">
        <title>New reference genome sequences of hot pepper reveal the massive evolution of plant disease-resistance genes by retroduplication.</title>
        <authorList>
            <person name="Kim S."/>
            <person name="Park J."/>
            <person name="Yeom S.I."/>
            <person name="Kim Y.M."/>
            <person name="Seo E."/>
            <person name="Kim K.T."/>
            <person name="Kim M.S."/>
            <person name="Lee J.M."/>
            <person name="Cheong K."/>
            <person name="Shin H.S."/>
            <person name="Kim S.B."/>
            <person name="Han K."/>
            <person name="Lee J."/>
            <person name="Park M."/>
            <person name="Lee H.A."/>
            <person name="Lee H.Y."/>
            <person name="Lee Y."/>
            <person name="Oh S."/>
            <person name="Lee J.H."/>
            <person name="Choi E."/>
            <person name="Choi E."/>
            <person name="Lee S.E."/>
            <person name="Jeon J."/>
            <person name="Kim H."/>
            <person name="Choi G."/>
            <person name="Song H."/>
            <person name="Lee J."/>
            <person name="Lee S.C."/>
            <person name="Kwon J.K."/>
            <person name="Lee H.Y."/>
            <person name="Koo N."/>
            <person name="Hong Y."/>
            <person name="Kim R.W."/>
            <person name="Kang W.H."/>
            <person name="Huh J.H."/>
            <person name="Kang B.C."/>
            <person name="Yang T.J."/>
            <person name="Lee Y.H."/>
            <person name="Bennetzen J.L."/>
            <person name="Choi D."/>
        </authorList>
    </citation>
    <scope>NUCLEOTIDE SEQUENCE [LARGE SCALE GENOMIC DNA]</scope>
    <source>
        <strain>cv. CM334</strain>
    </source>
</reference>
<keyword id="KW-0150">Chloroplast</keyword>
<keyword id="KW-0934">Plastid</keyword>
<keyword id="KW-1185">Reference proteome</keyword>
<keyword id="KW-0809">Transit peptide</keyword>
<sequence>MGTLTASLVAPSKLNPEKHSSLFVYKTRRKSHKNQSIVPVARLFGPAIFEASKLKVLFLGVDEKKHPGKLPRTYTLTHSDITSKLTLAISQTINNSQLQGWYNRLQRDEVVAEWKKVKGKMSLHVHCHISGGHFMLDLFARLRYYIFCKELPVVLKAFVHGDENLLKNYPELQQALVWVYFHSNIQEFNKVECWGPLKDAASPSSSGVGGGMNTSFTSNSNIKWILPKPCEETCTCCFPPMSVIPWPSTTNVENGTIQQGLQEQQS</sequence>